<name>STCL_EMENI</name>
<keyword id="KW-0349">Heme</keyword>
<keyword id="KW-0408">Iron</keyword>
<keyword id="KW-0472">Membrane</keyword>
<keyword id="KW-0479">Metal-binding</keyword>
<keyword id="KW-0503">Monooxygenase</keyword>
<keyword id="KW-0521">NADP</keyword>
<keyword id="KW-0560">Oxidoreductase</keyword>
<keyword id="KW-1185">Reference proteome</keyword>
<keyword id="KW-0812">Transmembrane</keyword>
<keyword id="KW-1133">Transmembrane helix</keyword>
<feature type="chain" id="PRO_0000052049" description="Versicolorin B desaturase stcL">
    <location>
        <begin position="1"/>
        <end position="496"/>
    </location>
</feature>
<feature type="transmembrane region" description="Helical" evidence="3">
    <location>
        <begin position="3"/>
        <end position="23"/>
    </location>
</feature>
<feature type="binding site" description="axial binding residue" evidence="1">
    <location>
        <position position="440"/>
    </location>
    <ligand>
        <name>heme</name>
        <dbReference type="ChEBI" id="CHEBI:30413"/>
    </ligand>
    <ligandPart>
        <name>Fe</name>
        <dbReference type="ChEBI" id="CHEBI:18248"/>
    </ligandPart>
</feature>
<protein>
    <recommendedName>
        <fullName evidence="13">Versicolorin B desaturase stcL</fullName>
        <ecNumber evidence="10">1.14.19.n5</ecNumber>
    </recommendedName>
    <alternativeName>
        <fullName>Cytochrome P450 60B</fullName>
    </alternativeName>
    <alternativeName>
        <fullName evidence="13">Cytochrome P450 monooxygenase stcL</fullName>
    </alternativeName>
    <alternativeName>
        <fullName evidence="13">Sterigmatocystin biosynthesis cluster protein L</fullName>
    </alternativeName>
</protein>
<sequence>MAFLSLPILTALGAVVYVLFQLVYNLYFHPLRDYPGPLLWRASSLPWKLTLLRGTMHHDLMRHHQTYGDTVRIKPDEISYANGQAWRDIHAHVPGRPEFLKDPVRLPLAPNGVMSILVSDTRNHARFRSLFGHAFSDKGLRAQEPTIARYADLLVEVLREVADTGKSVEMVRYFNMAIFDSIGALSFGESFDSLRNRELHPWVDTIHKNLKSVAISHVLRSMGVEFLAPYLMPAELRGKRQENYTYAIEKLKKRMQKTGDQGDFWDRVIVKSADGNQSGDGMSYGEMINNAAVMVVAGSETTSSALCGCTYLLCKFDKMDKAVAEVRGAFAAADQIDLVSVSRLPYLTAVIDETLRMYPSVPGQPPRVVPEGGAIVCGRFVPAETRVGVSHLGAYYAPYNFSHADKFIPERHLAGAKLEEPFRHDNYAAYQPWSVGVRNCIGRNLAYAEVRLTLAKLLWHFDISLDEERTGNFLDQKIWSIWAKRELYLEIRTREF</sequence>
<evidence type="ECO:0000250" key="1">
    <source>
        <dbReference type="UniProtKB" id="P04798"/>
    </source>
</evidence>
<evidence type="ECO:0000250" key="2">
    <source>
        <dbReference type="UniProtKB" id="Q12053"/>
    </source>
</evidence>
<evidence type="ECO:0000255" key="3"/>
<evidence type="ECO:0000269" key="4">
    <source>
    </source>
</evidence>
<evidence type="ECO:0000269" key="5">
    <source>
    </source>
</evidence>
<evidence type="ECO:0000269" key="6">
    <source>
    </source>
</evidence>
<evidence type="ECO:0000269" key="7">
    <source>
    </source>
</evidence>
<evidence type="ECO:0000269" key="8">
    <source>
    </source>
</evidence>
<evidence type="ECO:0000269" key="9">
    <source>
    </source>
</evidence>
<evidence type="ECO:0000269" key="10">
    <source>
    </source>
</evidence>
<evidence type="ECO:0000269" key="11">
    <source>
    </source>
</evidence>
<evidence type="ECO:0000303" key="12">
    <source>
    </source>
</evidence>
<evidence type="ECO:0000303" key="13">
    <source>
    </source>
</evidence>
<evidence type="ECO:0000305" key="14"/>
<evidence type="ECO:0000305" key="15">
    <source>
    </source>
</evidence>
<proteinExistence type="evidence at protein level"/>
<gene>
    <name evidence="13" type="primary">stcL</name>
    <name type="synonym">cyp60B</name>
    <name type="ORF">AN11013</name>
</gene>
<accession>Q00707</accession>
<accession>C8VDT6</accession>
<accession>Q5AV67</accession>
<dbReference type="EC" id="1.14.19.n5" evidence="10"/>
<dbReference type="EMBL" id="U34740">
    <property type="protein sequence ID" value="AAC49200.1"/>
    <property type="status" value="ALT_FRAME"/>
    <property type="molecule type" value="Genomic_DNA"/>
</dbReference>
<dbReference type="EMBL" id="AACD01000132">
    <property type="protein sequence ID" value="EAA61601.1"/>
    <property type="status" value="ALT_SEQ"/>
    <property type="molecule type" value="Genomic_DNA"/>
</dbReference>
<dbReference type="EMBL" id="BN001304">
    <property type="protein sequence ID" value="CBF80160.1"/>
    <property type="molecule type" value="Genomic_DNA"/>
</dbReference>
<dbReference type="RefSeq" id="XP_681082.1">
    <property type="nucleotide sequence ID" value="XM_675990.1"/>
</dbReference>
<dbReference type="SMR" id="Q00707"/>
<dbReference type="STRING" id="227321.Q00707"/>
<dbReference type="EnsemblFungi" id="CBF80160">
    <property type="protein sequence ID" value="CBF80160"/>
    <property type="gene ID" value="ANIA_11013"/>
</dbReference>
<dbReference type="KEGG" id="ani:ANIA_11013"/>
<dbReference type="VEuPathDB" id="FungiDB:AN11013"/>
<dbReference type="eggNOG" id="KOG0158">
    <property type="taxonomic scope" value="Eukaryota"/>
</dbReference>
<dbReference type="HOGENOM" id="CLU_001570_14_11_1"/>
<dbReference type="InParanoid" id="Q00707"/>
<dbReference type="OMA" id="WIPENTS"/>
<dbReference type="OrthoDB" id="1470350at2759"/>
<dbReference type="UniPathway" id="UPA00377"/>
<dbReference type="Proteomes" id="UP000000560">
    <property type="component" value="Chromosome IV"/>
</dbReference>
<dbReference type="GO" id="GO:0016020">
    <property type="term" value="C:membrane"/>
    <property type="evidence" value="ECO:0007669"/>
    <property type="project" value="UniProtKB-SubCell"/>
</dbReference>
<dbReference type="GO" id="GO:0020037">
    <property type="term" value="F:heme binding"/>
    <property type="evidence" value="ECO:0007669"/>
    <property type="project" value="InterPro"/>
</dbReference>
<dbReference type="GO" id="GO:0005506">
    <property type="term" value="F:iron ion binding"/>
    <property type="evidence" value="ECO:0007669"/>
    <property type="project" value="InterPro"/>
</dbReference>
<dbReference type="GO" id="GO:0004497">
    <property type="term" value="F:monooxygenase activity"/>
    <property type="evidence" value="ECO:0007669"/>
    <property type="project" value="UniProtKB-KW"/>
</dbReference>
<dbReference type="GO" id="GO:0140398">
    <property type="term" value="F:versicolorin B desaturase activity"/>
    <property type="evidence" value="ECO:0007669"/>
    <property type="project" value="RHEA"/>
</dbReference>
<dbReference type="GO" id="GO:0045461">
    <property type="term" value="P:sterigmatocystin biosynthetic process"/>
    <property type="evidence" value="ECO:0000315"/>
    <property type="project" value="AspGD"/>
</dbReference>
<dbReference type="CDD" id="cd11058">
    <property type="entry name" value="CYP60B-like"/>
    <property type="match status" value="1"/>
</dbReference>
<dbReference type="FunFam" id="1.10.630.10:FF:000047">
    <property type="entry name" value="Cytochrome P450 monooxygenase"/>
    <property type="match status" value="1"/>
</dbReference>
<dbReference type="Gene3D" id="1.10.630.10">
    <property type="entry name" value="Cytochrome P450"/>
    <property type="match status" value="1"/>
</dbReference>
<dbReference type="InterPro" id="IPR001128">
    <property type="entry name" value="Cyt_P450"/>
</dbReference>
<dbReference type="InterPro" id="IPR017972">
    <property type="entry name" value="Cyt_P450_CS"/>
</dbReference>
<dbReference type="InterPro" id="IPR002401">
    <property type="entry name" value="Cyt_P450_E_grp-I"/>
</dbReference>
<dbReference type="InterPro" id="IPR036396">
    <property type="entry name" value="Cyt_P450_sf"/>
</dbReference>
<dbReference type="InterPro" id="IPR050121">
    <property type="entry name" value="Cytochrome_P450_monoxygenase"/>
</dbReference>
<dbReference type="PANTHER" id="PTHR24305">
    <property type="entry name" value="CYTOCHROME P450"/>
    <property type="match status" value="1"/>
</dbReference>
<dbReference type="PANTHER" id="PTHR24305:SF210">
    <property type="entry name" value="CYTOCHROME P450 MONOOXYGENASE ASQL-RELATED"/>
    <property type="match status" value="1"/>
</dbReference>
<dbReference type="Pfam" id="PF00067">
    <property type="entry name" value="p450"/>
    <property type="match status" value="1"/>
</dbReference>
<dbReference type="PRINTS" id="PR00463">
    <property type="entry name" value="EP450I"/>
</dbReference>
<dbReference type="PRINTS" id="PR00385">
    <property type="entry name" value="P450"/>
</dbReference>
<dbReference type="SUPFAM" id="SSF48264">
    <property type="entry name" value="Cytochrome P450"/>
    <property type="match status" value="1"/>
</dbReference>
<dbReference type="PROSITE" id="PS00086">
    <property type="entry name" value="CYTOCHROME_P450"/>
    <property type="match status" value="1"/>
</dbReference>
<organism>
    <name type="scientific">Emericella nidulans (strain FGSC A4 / ATCC 38163 / CBS 112.46 / NRRL 194 / M139)</name>
    <name type="common">Aspergillus nidulans</name>
    <dbReference type="NCBI Taxonomy" id="227321"/>
    <lineage>
        <taxon>Eukaryota</taxon>
        <taxon>Fungi</taxon>
        <taxon>Dikarya</taxon>
        <taxon>Ascomycota</taxon>
        <taxon>Pezizomycotina</taxon>
        <taxon>Eurotiomycetes</taxon>
        <taxon>Eurotiomycetidae</taxon>
        <taxon>Eurotiales</taxon>
        <taxon>Aspergillaceae</taxon>
        <taxon>Aspergillus</taxon>
        <taxon>Aspergillus subgen. Nidulantes</taxon>
    </lineage>
</organism>
<comment type="function">
    <text evidence="2 4 5 7 8 9 10 12 15">Cytochrome P450 monooxygenase; part of the gene cluster that mediates the biosynthesis of sterigmatocystin (ST), a polyketide-derived furanocoumarin which is part of the most toxic and carcinogenic compounds among the known mycotoxins (PubMed:8643646, PubMed:8999832). The first step in the biosynthesis of sterigmatocystin is the production of hexanoate by the fatty acid synthase (FAS) units stcJ and stcK (PubMed:8962148). The polyketide backbone is assembled by the non-reducing polyketide synthase stcA by condensation of the starter hexanoyl-CoA and 7 malonyl-CoA extender units followed by cyclization and release of norsolorinic acid (By similarity). Norsolorinic acid is the first stable intermediate in the biosynthesis of sterigmatocystin and is converted into averantin (AVN) by the ketoreductase stcE which reduces the hexanoate ketone to an alcohol (Probable) (PubMed:8643646). Averantin is then oxidized into 5'-hydroxyaverantin (HAVN) by the cytochrome P450 monooxygenase stcF (PubMed:10618248). 5'-hydroxyaverantin is further converted to 5'-oxyaverantin (OAVN) by the 5'-hydroxyaverantin dehydrogenase stcG (PubMed:24957370). The next step is the conversion of OAVN into averufin (AVF) which is catalyzed by a yet to be identified enzyme (PubMed:24957370). The cytochrome P450 monooxygenase stcB and the flavin-binding monooxygenase stcW are both required for the conversion of averufin to 1-hydroxyversicolorone (PubMed:10618248). The esterase stcI probably catalyzes the formation of versiconal hemiacetal acetate from 1-hydroxyversicolorone (PubMed:24957370). The oxydoreductase stcN then probably catalyzes the biosynthetic step from versiconal to versicolorin B (VERB) (PubMed:24957370). The next step is performed by the versicolorin B desaturase stcL to produce versicolorin A (VERA) (PubMed:8999832). The ketoreductase stcU and the cytochrome P450 monooxygenase stcS are involved in the conversion of versicolorin A to demethylsterigmatocystin (PubMed:7486998). The Baeyer-Villiger oxidas stcQ and the reductase stcR might be involved in the biosynthetic step from versicolorin A to demethylsterigmatocystin (PubMed:24957370). The final step in the biosynthesis of sterigmatocystin is the methylation of demethylsterigmatocystin catalyzed by the methyltransferase stcP (PubMed:8900026).</text>
</comment>
<comment type="catalytic activity">
    <reaction evidence="10">
        <text>versicolorin B + NADPH + O2 + H(+) = versicolorin A + NADP(+) + 2 H2O</text>
        <dbReference type="Rhea" id="RHEA:35743"/>
        <dbReference type="ChEBI" id="CHEBI:15377"/>
        <dbReference type="ChEBI" id="CHEBI:15378"/>
        <dbReference type="ChEBI" id="CHEBI:15379"/>
        <dbReference type="ChEBI" id="CHEBI:57783"/>
        <dbReference type="ChEBI" id="CHEBI:58349"/>
        <dbReference type="ChEBI" id="CHEBI:77951"/>
        <dbReference type="ChEBI" id="CHEBI:77976"/>
        <dbReference type="EC" id="1.14.19.n5"/>
    </reaction>
</comment>
<comment type="cofactor">
    <cofactor evidence="1">
        <name>heme</name>
        <dbReference type="ChEBI" id="CHEBI:30413"/>
    </cofactor>
</comment>
<comment type="pathway">
    <text evidence="7 10">Mycotoxin biosynthesis; sterigmatocystin biosynthesis.</text>
</comment>
<comment type="subcellular location">
    <subcellularLocation>
        <location evidence="3">Membrane</location>
        <topology evidence="3">Single-pass membrane protein</topology>
    </subcellularLocation>
</comment>
<comment type="induction">
    <text evidence="6 7 11">The genes forming the sterigmatocystin biosynthesis cluster are co-regulated and induced on oatmeal porridge or the fungal isolates were grown either on oatmeal porridge or in YEC medium (0.2% yeast extract, 5.0% corn steep liquor) (PubMed:8017929, PubMed:8643646). Expression is positively regulated by the cluster-specific transcription factor aflR that binds the palindromic sequence 5'-TCG(N5)CGA-3'found in the promoter (PubMed:9680223).</text>
</comment>
<comment type="disruption phenotype">
    <text evidence="10">Impairs the production of sterigmatocystin and leads to the accumulation of dihydrosterigmatocystin.</text>
</comment>
<comment type="similarity">
    <text evidence="14">Belongs to the cytochrome P450 family.</text>
</comment>
<comment type="sequence caution" evidence="14">
    <conflict type="frameshift">
        <sequence resource="EMBL-CDS" id="AAC49200"/>
    </conflict>
</comment>
<comment type="sequence caution" evidence="14">
    <conflict type="erroneous gene model prediction">
        <sequence resource="EMBL-CDS" id="EAA61601"/>
    </conflict>
    <text>The predicted gene AN7813 has been split into 2 genes: AN11013 and AN11017.</text>
</comment>
<reference key="1">
    <citation type="journal article" date="1996" name="Proc. Natl. Acad. Sci. U.S.A.">
        <title>Twenty-five coregulated transcripts define a sterigmatocystin gene cluster in Aspergillus nidulans.</title>
        <authorList>
            <person name="Brown D.W."/>
            <person name="Yu J.-H."/>
            <person name="Kelkar H.S."/>
            <person name="Fernandes M."/>
            <person name="Nesbitt T.C."/>
            <person name="Keller N.P."/>
            <person name="Adams T.H."/>
            <person name="Leonard T.J."/>
        </authorList>
    </citation>
    <scope>NUCLEOTIDE SEQUENCE [GENOMIC DNA]</scope>
    <scope>INDUCTION</scope>
    <scope>FUNCTION</scope>
    <scope>PATHWAY</scope>
    <source>
        <strain>FGSC 26</strain>
    </source>
</reference>
<reference key="2">
    <citation type="journal article" date="2005" name="Nature">
        <title>Sequencing of Aspergillus nidulans and comparative analysis with A. fumigatus and A. oryzae.</title>
        <authorList>
            <person name="Galagan J.E."/>
            <person name="Calvo S.E."/>
            <person name="Cuomo C."/>
            <person name="Ma L.-J."/>
            <person name="Wortman J.R."/>
            <person name="Batzoglou S."/>
            <person name="Lee S.-I."/>
            <person name="Bastuerkmen M."/>
            <person name="Spevak C.C."/>
            <person name="Clutterbuck J."/>
            <person name="Kapitonov V."/>
            <person name="Jurka J."/>
            <person name="Scazzocchio C."/>
            <person name="Farman M.L."/>
            <person name="Butler J."/>
            <person name="Purcell S."/>
            <person name="Harris S."/>
            <person name="Braus G.H."/>
            <person name="Draht O."/>
            <person name="Busch S."/>
            <person name="D'Enfert C."/>
            <person name="Bouchier C."/>
            <person name="Goldman G.H."/>
            <person name="Bell-Pedersen D."/>
            <person name="Griffiths-Jones S."/>
            <person name="Doonan J.H."/>
            <person name="Yu J."/>
            <person name="Vienken K."/>
            <person name="Pain A."/>
            <person name="Freitag M."/>
            <person name="Selker E.U."/>
            <person name="Archer D.B."/>
            <person name="Penalva M.A."/>
            <person name="Oakley B.R."/>
            <person name="Momany M."/>
            <person name="Tanaka T."/>
            <person name="Kumagai T."/>
            <person name="Asai K."/>
            <person name="Machida M."/>
            <person name="Nierman W.C."/>
            <person name="Denning D.W."/>
            <person name="Caddick M.X."/>
            <person name="Hynes M."/>
            <person name="Paoletti M."/>
            <person name="Fischer R."/>
            <person name="Miller B.L."/>
            <person name="Dyer P.S."/>
            <person name="Sachs M.S."/>
            <person name="Osmani S.A."/>
            <person name="Birren B.W."/>
        </authorList>
    </citation>
    <scope>NUCLEOTIDE SEQUENCE [LARGE SCALE GENOMIC DNA]</scope>
    <source>
        <strain>FGSC A4 / ATCC 38163 / CBS 112.46 / NRRL 194 / M139</strain>
    </source>
</reference>
<reference key="3">
    <citation type="journal article" date="2009" name="Fungal Genet. Biol.">
        <title>The 2008 update of the Aspergillus nidulans genome annotation: a community effort.</title>
        <authorList>
            <person name="Wortman J.R."/>
            <person name="Gilsenan J.M."/>
            <person name="Joardar V."/>
            <person name="Deegan J."/>
            <person name="Clutterbuck J."/>
            <person name="Andersen M.R."/>
            <person name="Archer D."/>
            <person name="Bencina M."/>
            <person name="Braus G."/>
            <person name="Coutinho P."/>
            <person name="von Dohren H."/>
            <person name="Doonan J."/>
            <person name="Driessen A.J."/>
            <person name="Durek P."/>
            <person name="Espeso E."/>
            <person name="Fekete E."/>
            <person name="Flipphi M."/>
            <person name="Estrada C.G."/>
            <person name="Geysens S."/>
            <person name="Goldman G."/>
            <person name="de Groot P.W."/>
            <person name="Hansen K."/>
            <person name="Harris S.D."/>
            <person name="Heinekamp T."/>
            <person name="Helmstaedt K."/>
            <person name="Henrissat B."/>
            <person name="Hofmann G."/>
            <person name="Homan T."/>
            <person name="Horio T."/>
            <person name="Horiuchi H."/>
            <person name="James S."/>
            <person name="Jones M."/>
            <person name="Karaffa L."/>
            <person name="Karanyi Z."/>
            <person name="Kato M."/>
            <person name="Keller N."/>
            <person name="Kelly D.E."/>
            <person name="Kiel J.A."/>
            <person name="Kim J.M."/>
            <person name="van der Klei I.J."/>
            <person name="Klis F.M."/>
            <person name="Kovalchuk A."/>
            <person name="Krasevec N."/>
            <person name="Kubicek C.P."/>
            <person name="Liu B."/>
            <person name="Maccabe A."/>
            <person name="Meyer V."/>
            <person name="Mirabito P."/>
            <person name="Miskei M."/>
            <person name="Mos M."/>
            <person name="Mullins J."/>
            <person name="Nelson D.R."/>
            <person name="Nielsen J."/>
            <person name="Oakley B.R."/>
            <person name="Osmani S.A."/>
            <person name="Pakula T."/>
            <person name="Paszewski A."/>
            <person name="Paulsen I."/>
            <person name="Pilsyk S."/>
            <person name="Pocsi I."/>
            <person name="Punt P.J."/>
            <person name="Ram A.F."/>
            <person name="Ren Q."/>
            <person name="Robellet X."/>
            <person name="Robson G."/>
            <person name="Seiboth B."/>
            <person name="van Solingen P."/>
            <person name="Specht T."/>
            <person name="Sun J."/>
            <person name="Taheri-Talesh N."/>
            <person name="Takeshita N."/>
            <person name="Ussery D."/>
            <person name="vanKuyk P.A."/>
            <person name="Visser H."/>
            <person name="van de Vondervoort P.J."/>
            <person name="de Vries R.P."/>
            <person name="Walton J."/>
            <person name="Xiang X."/>
            <person name="Xiong Y."/>
            <person name="Zeng A.P."/>
            <person name="Brandt B.W."/>
            <person name="Cornell M.J."/>
            <person name="van den Hondel C.A."/>
            <person name="Visser J."/>
            <person name="Oliver S.G."/>
            <person name="Turner G."/>
        </authorList>
    </citation>
    <scope>GENOME REANNOTATION</scope>
    <source>
        <strain>FGSC A4 / ATCC 38163 / CBS 112.46 / NRRL 194 / M139</strain>
    </source>
</reference>
<reference key="4">
    <citation type="journal article" date="1994" name="Appl. Environ. Microbiol.">
        <title>Aspergillus nidulans verA is required for production of the mycotoxin sterigmatocystin.</title>
        <authorList>
            <person name="Keller N.P."/>
            <person name="Kantz N.J."/>
            <person name="Adams T.H."/>
        </authorList>
    </citation>
    <scope>FUNCTION</scope>
    <scope>INDUCTION</scope>
</reference>
<reference key="5">
    <citation type="journal article" date="1995" name="Appl. Environ. Microbiol.">
        <title>StcS, a putative P-450 monooxygenase, is required for the conversion of versicolorin A to sterigmatocystin in Aspergillus nidulans.</title>
        <authorList>
            <person name="Keller N.P."/>
            <person name="Segner S."/>
            <person name="Bhatnagar D."/>
            <person name="Adams T.H."/>
        </authorList>
    </citation>
    <scope>FUNCTION</scope>
</reference>
<reference key="6">
    <citation type="journal article" date="1995" name="J. Bacteriol.">
        <title>Sterigmatocystin biosynthesis in Aspergillus nidulans requires a novel type I polyketide synthase.</title>
        <authorList>
            <person name="Yu J.-H."/>
            <person name="Leonard T.J."/>
        </authorList>
    </citation>
    <scope>FUNCTION</scope>
    <source>
        <strain>FGSC A4 / ATCC 38163 / CBS 112.46 / NRRL 194 / M139</strain>
    </source>
</reference>
<reference key="7">
    <citation type="journal article" date="1996" name="Appl. Environ. Microbiol.">
        <title>Aspergillus nidulans stcP encodes an O-methyltransferase that is required for sterigmatocystin biosynthesis.</title>
        <authorList>
            <person name="Kelkar H.S."/>
            <person name="Keller N.P."/>
            <person name="Adams T.H."/>
        </authorList>
    </citation>
    <scope>FUNCTION</scope>
</reference>
<reference key="8">
    <citation type="journal article" date="1996" name="Proc. Natl. Acad. Sci. U.S.A.">
        <title>Aspergillus has distinct fatty acid synthases for primary and secondary metabolism.</title>
        <authorList>
            <person name="Brown D.W."/>
            <person name="Adams T.H."/>
            <person name="Keller N.P."/>
        </authorList>
    </citation>
    <scope>FUNCTION</scope>
</reference>
<reference key="9">
    <citation type="journal article" date="1997" name="J. Biol. Chem.">
        <title>Aspergillus nidulans stcL encodes a putative cytochrome P-450 monooxygenase required for bisfuran desaturation during aflatoxin/sterigmatocystin biosynthesis.</title>
        <authorList>
            <person name="Kelkar H.S."/>
            <person name="Skloss T.W."/>
            <person name="Haw J.F."/>
            <person name="Keller N.P."/>
            <person name="Adams T.H."/>
        </authorList>
    </citation>
    <scope>FUNCTION</scope>
    <scope>CATALYTIC ACTIVITY</scope>
    <scope>DISRUPTION PHENOTYPE</scope>
</reference>
<reference key="10">
    <citation type="journal article" date="1998" name="Mol. Microbiol.">
        <title>Sequence-specific binding by Aspergillus nidulans aflR, a C6 zinc cluster protein regulating mycotoxin biosynthesis.</title>
        <authorList>
            <person name="Fernandes M."/>
            <person name="Keller N.P."/>
            <person name="Adams T.H."/>
        </authorList>
    </citation>
    <scope>INDUCTION</scope>
</reference>
<reference key="11">
    <citation type="journal article" date="2000" name="Appl. Environ. Microbiol.">
        <title>Requirement of monooxygenase-mediated steps for sterigmatocystin biosynthesis by Aspergillus nidulans.</title>
        <authorList>
            <person name="Keller N.P."/>
            <person name="Watanabe C.M."/>
            <person name="Kelkar H.S."/>
            <person name="Adams T.H."/>
            <person name="Townsend C.A."/>
        </authorList>
    </citation>
    <scope>FUNCTION</scope>
</reference>
<reference key="12">
    <citation type="journal article" date="2012" name="Metabolites">
        <title>Genetics of polyketide metabolism in Aspergillus nidulans.</title>
        <authorList>
            <person name="Klejnstrup M.L."/>
            <person name="Frandsen R.J."/>
            <person name="Holm D.K."/>
            <person name="Nielsen M.T."/>
            <person name="Mortensen U.H."/>
            <person name="Larsen T.O."/>
            <person name="Nielsen J.B."/>
        </authorList>
    </citation>
    <scope>REVIEW ON STERIGMATOCYSTIN BIOSYNTHESIS</scope>
</reference>